<reference key="1">
    <citation type="journal article" date="2004" name="Genome Res.">
        <title>The genome sequence of Mycoplasma mycoides subsp. mycoides SC type strain PG1T, the causative agent of contagious bovine pleuropneumonia (CBPP).</title>
        <authorList>
            <person name="Westberg J."/>
            <person name="Persson A."/>
            <person name="Holmberg A."/>
            <person name="Goesmann A."/>
            <person name="Lundeberg J."/>
            <person name="Johansson K.-E."/>
            <person name="Pettersson B."/>
            <person name="Uhlen M."/>
        </authorList>
    </citation>
    <scope>NUCLEOTIDE SEQUENCE [LARGE SCALE GENOMIC DNA]</scope>
    <source>
        <strain>CCUG 32753 / NCTC 10114 / PG1</strain>
    </source>
</reference>
<proteinExistence type="inferred from homology"/>
<comment type="function">
    <text evidence="1">Necessary for efficient RNA polymerase transcription elongation past template-encoded arresting sites. The arresting sites in DNA have the property of trapping a certain fraction of elongating RNA polymerases that pass through, resulting in locked ternary complexes. Cleavage of the nascent transcript by cleavage factors such as GreA or GreB allows the resumption of elongation from the new 3'terminus. GreA releases sequences of 2 to 3 nucleotides.</text>
</comment>
<comment type="similarity">
    <text evidence="1">Belongs to the GreA/GreB family.</text>
</comment>
<sequence>MSKEIILTQEGLEELKAELKHLLKVVRPKVIEELVEARNQGDLSENADYDAARNRQAEVEARIKEVETLINRAKVIDDSKTHSTGEVKIGSTVQFVSSLDNKLKEIKIVGAIEADPFSNLISNESPIAKAIIGKKVNTTVEIKDISKPYKITIKSIK</sequence>
<dbReference type="EMBL" id="BX293980">
    <property type="protein sequence ID" value="CAE76937.1"/>
    <property type="molecule type" value="Genomic_DNA"/>
</dbReference>
<dbReference type="RefSeq" id="NP_975295.1">
    <property type="nucleotide sequence ID" value="NC_005364.2"/>
</dbReference>
<dbReference type="RefSeq" id="WP_011166493.1">
    <property type="nucleotide sequence ID" value="NC_005364.2"/>
</dbReference>
<dbReference type="SMR" id="Q6MTU9"/>
<dbReference type="STRING" id="272632.MSC_0296"/>
<dbReference type="KEGG" id="mmy:MSC_0296"/>
<dbReference type="PATRIC" id="fig|272632.4.peg.316"/>
<dbReference type="eggNOG" id="COG0782">
    <property type="taxonomic scope" value="Bacteria"/>
</dbReference>
<dbReference type="HOGENOM" id="CLU_101379_2_1_14"/>
<dbReference type="Proteomes" id="UP000001016">
    <property type="component" value="Chromosome"/>
</dbReference>
<dbReference type="GO" id="GO:0003677">
    <property type="term" value="F:DNA binding"/>
    <property type="evidence" value="ECO:0007669"/>
    <property type="project" value="UniProtKB-UniRule"/>
</dbReference>
<dbReference type="GO" id="GO:0070063">
    <property type="term" value="F:RNA polymerase binding"/>
    <property type="evidence" value="ECO:0007669"/>
    <property type="project" value="InterPro"/>
</dbReference>
<dbReference type="GO" id="GO:0006354">
    <property type="term" value="P:DNA-templated transcription elongation"/>
    <property type="evidence" value="ECO:0007669"/>
    <property type="project" value="TreeGrafter"/>
</dbReference>
<dbReference type="GO" id="GO:0032784">
    <property type="term" value="P:regulation of DNA-templated transcription elongation"/>
    <property type="evidence" value="ECO:0007669"/>
    <property type="project" value="UniProtKB-UniRule"/>
</dbReference>
<dbReference type="FunFam" id="1.10.287.180:FF:000001">
    <property type="entry name" value="Transcription elongation factor GreA"/>
    <property type="match status" value="1"/>
</dbReference>
<dbReference type="Gene3D" id="3.10.50.30">
    <property type="entry name" value="Transcription elongation factor, GreA/GreB, C-terminal domain"/>
    <property type="match status" value="1"/>
</dbReference>
<dbReference type="Gene3D" id="1.10.287.180">
    <property type="entry name" value="Transcription elongation factor, GreA/GreB, N-terminal domain"/>
    <property type="match status" value="1"/>
</dbReference>
<dbReference type="HAMAP" id="MF_00105">
    <property type="entry name" value="GreA_GreB"/>
    <property type="match status" value="1"/>
</dbReference>
<dbReference type="InterPro" id="IPR036953">
    <property type="entry name" value="GreA/GreB_C_sf"/>
</dbReference>
<dbReference type="InterPro" id="IPR018151">
    <property type="entry name" value="TF_GreA/GreB_CS"/>
</dbReference>
<dbReference type="InterPro" id="IPR006359">
    <property type="entry name" value="Tscrpt_elong_fac_GreA"/>
</dbReference>
<dbReference type="InterPro" id="IPR028624">
    <property type="entry name" value="Tscrpt_elong_fac_GreA/B"/>
</dbReference>
<dbReference type="InterPro" id="IPR001437">
    <property type="entry name" value="Tscrpt_elong_fac_GreA/B_C"/>
</dbReference>
<dbReference type="InterPro" id="IPR023459">
    <property type="entry name" value="Tscrpt_elong_fac_GreA/B_fam"/>
</dbReference>
<dbReference type="InterPro" id="IPR022691">
    <property type="entry name" value="Tscrpt_elong_fac_GreA/B_N"/>
</dbReference>
<dbReference type="InterPro" id="IPR036805">
    <property type="entry name" value="Tscrpt_elong_fac_GreA/B_N_sf"/>
</dbReference>
<dbReference type="NCBIfam" id="TIGR01462">
    <property type="entry name" value="greA"/>
    <property type="match status" value="1"/>
</dbReference>
<dbReference type="NCBIfam" id="NF001263">
    <property type="entry name" value="PRK00226.1-4"/>
    <property type="match status" value="1"/>
</dbReference>
<dbReference type="PANTHER" id="PTHR30437">
    <property type="entry name" value="TRANSCRIPTION ELONGATION FACTOR GREA"/>
    <property type="match status" value="1"/>
</dbReference>
<dbReference type="PANTHER" id="PTHR30437:SF4">
    <property type="entry name" value="TRANSCRIPTION ELONGATION FACTOR GREA"/>
    <property type="match status" value="1"/>
</dbReference>
<dbReference type="Pfam" id="PF01272">
    <property type="entry name" value="GreA_GreB"/>
    <property type="match status" value="1"/>
</dbReference>
<dbReference type="Pfam" id="PF03449">
    <property type="entry name" value="GreA_GreB_N"/>
    <property type="match status" value="1"/>
</dbReference>
<dbReference type="PIRSF" id="PIRSF006092">
    <property type="entry name" value="GreA_GreB"/>
    <property type="match status" value="1"/>
</dbReference>
<dbReference type="SUPFAM" id="SSF54534">
    <property type="entry name" value="FKBP-like"/>
    <property type="match status" value="1"/>
</dbReference>
<dbReference type="SUPFAM" id="SSF46557">
    <property type="entry name" value="GreA transcript cleavage protein, N-terminal domain"/>
    <property type="match status" value="1"/>
</dbReference>
<dbReference type="PROSITE" id="PS00829">
    <property type="entry name" value="GREAB_1"/>
    <property type="match status" value="1"/>
</dbReference>
<accession>Q6MTU9</accession>
<keyword id="KW-0175">Coiled coil</keyword>
<keyword id="KW-0238">DNA-binding</keyword>
<keyword id="KW-1185">Reference proteome</keyword>
<keyword id="KW-0804">Transcription</keyword>
<keyword id="KW-0805">Transcription regulation</keyword>
<protein>
    <recommendedName>
        <fullName evidence="1">Transcription elongation factor GreA</fullName>
    </recommendedName>
    <alternativeName>
        <fullName evidence="1">Transcript cleavage factor GreA</fullName>
    </alternativeName>
</protein>
<organism>
    <name type="scientific">Mycoplasma mycoides subsp. mycoides SC (strain CCUG 32753 / NCTC 10114 / PG1)</name>
    <dbReference type="NCBI Taxonomy" id="272632"/>
    <lineage>
        <taxon>Bacteria</taxon>
        <taxon>Bacillati</taxon>
        <taxon>Mycoplasmatota</taxon>
        <taxon>Mollicutes</taxon>
        <taxon>Mycoplasmataceae</taxon>
        <taxon>Mycoplasma</taxon>
    </lineage>
</organism>
<gene>
    <name evidence="1" type="primary">greA</name>
    <name type="ordered locus">MSC_0296</name>
</gene>
<feature type="chain" id="PRO_1000034280" description="Transcription elongation factor GreA">
    <location>
        <begin position="1"/>
        <end position="157"/>
    </location>
</feature>
<feature type="coiled-coil region" evidence="1">
    <location>
        <begin position="1"/>
        <end position="75"/>
    </location>
</feature>
<evidence type="ECO:0000255" key="1">
    <source>
        <dbReference type="HAMAP-Rule" id="MF_00105"/>
    </source>
</evidence>
<name>GREA_MYCMS</name>